<proteinExistence type="inferred from homology"/>
<protein>
    <recommendedName>
        <fullName>Cytochrome b</fullName>
    </recommendedName>
    <alternativeName>
        <fullName>Complex III subunit 3</fullName>
    </alternativeName>
    <alternativeName>
        <fullName>Complex III subunit III</fullName>
    </alternativeName>
    <alternativeName>
        <fullName>Cytochrome b-c1 complex subunit 3</fullName>
    </alternativeName>
    <alternativeName>
        <fullName>Ubiquinol-cytochrome-c reductase complex cytochrome b subunit</fullName>
    </alternativeName>
</protein>
<organism>
    <name type="scientific">Rhinolophus ferrumequinum</name>
    <name type="common">Greater horseshoe bat</name>
    <dbReference type="NCBI Taxonomy" id="59479"/>
    <lineage>
        <taxon>Eukaryota</taxon>
        <taxon>Metazoa</taxon>
        <taxon>Chordata</taxon>
        <taxon>Craniata</taxon>
        <taxon>Vertebrata</taxon>
        <taxon>Euteleostomi</taxon>
        <taxon>Mammalia</taxon>
        <taxon>Eutheria</taxon>
        <taxon>Laurasiatheria</taxon>
        <taxon>Chiroptera</taxon>
        <taxon>Yinpterochiroptera</taxon>
        <taxon>Rhinolophoidea</taxon>
        <taxon>Rhinolophidae</taxon>
        <taxon>Rhinolophinae</taxon>
        <taxon>Rhinolophus</taxon>
    </lineage>
</organism>
<dbReference type="EMBL" id="AB085721">
    <property type="protein sequence ID" value="BAC16615.1"/>
    <property type="molecule type" value="Genomic_DNA"/>
</dbReference>
<dbReference type="EMBL" id="AB085722">
    <property type="protein sequence ID" value="BAC16616.1"/>
    <property type="molecule type" value="Genomic_DNA"/>
</dbReference>
<dbReference type="EMBL" id="AB085723">
    <property type="protein sequence ID" value="BAC16617.1"/>
    <property type="molecule type" value="Genomic_DNA"/>
</dbReference>
<dbReference type="EMBL" id="AB085724">
    <property type="protein sequence ID" value="BAC16618.1"/>
    <property type="molecule type" value="Genomic_DNA"/>
</dbReference>
<dbReference type="EMBL" id="AB085725">
    <property type="protein sequence ID" value="BAC16619.1"/>
    <property type="molecule type" value="Genomic_DNA"/>
</dbReference>
<dbReference type="EMBL" id="AB085726">
    <property type="protein sequence ID" value="BAC16620.1"/>
    <property type="molecule type" value="Genomic_DNA"/>
</dbReference>
<dbReference type="EMBL" id="AB085727">
    <property type="protein sequence ID" value="BAC16621.1"/>
    <property type="molecule type" value="Genomic_DNA"/>
</dbReference>
<dbReference type="EMBL" id="AB085728">
    <property type="protein sequence ID" value="BAC16622.1"/>
    <property type="molecule type" value="Genomic_DNA"/>
</dbReference>
<dbReference type="EMBL" id="AB085729">
    <property type="protein sequence ID" value="BAC16623.1"/>
    <property type="molecule type" value="Genomic_DNA"/>
</dbReference>
<dbReference type="EMBL" id="AB085730">
    <property type="protein sequence ID" value="BAC16624.1"/>
    <property type="molecule type" value="Genomic_DNA"/>
</dbReference>
<dbReference type="EMBL" id="AB085731">
    <property type="protein sequence ID" value="BAC16625.1"/>
    <property type="molecule type" value="Genomic_DNA"/>
</dbReference>
<dbReference type="EMBL" id="U95513">
    <property type="protein sequence ID" value="AAC48750.1"/>
    <property type="molecule type" value="Genomic_DNA"/>
</dbReference>
<dbReference type="EMBL" id="U95514">
    <property type="protein sequence ID" value="AAC48751.1"/>
    <property type="molecule type" value="Genomic_DNA"/>
</dbReference>
<dbReference type="SMR" id="O21298"/>
<dbReference type="FunCoup" id="O21298">
    <property type="interactions" value="183"/>
</dbReference>
<dbReference type="InParanoid" id="O21298"/>
<dbReference type="Proteomes" id="UP000472240">
    <property type="component" value="Mitochondrion"/>
</dbReference>
<dbReference type="GO" id="GO:0005743">
    <property type="term" value="C:mitochondrial inner membrane"/>
    <property type="evidence" value="ECO:0007669"/>
    <property type="project" value="UniProtKB-SubCell"/>
</dbReference>
<dbReference type="GO" id="GO:0045275">
    <property type="term" value="C:respiratory chain complex III"/>
    <property type="evidence" value="ECO:0007669"/>
    <property type="project" value="InterPro"/>
</dbReference>
<dbReference type="GO" id="GO:0046872">
    <property type="term" value="F:metal ion binding"/>
    <property type="evidence" value="ECO:0007669"/>
    <property type="project" value="UniProtKB-KW"/>
</dbReference>
<dbReference type="GO" id="GO:0008121">
    <property type="term" value="F:ubiquinol-cytochrome-c reductase activity"/>
    <property type="evidence" value="ECO:0007669"/>
    <property type="project" value="InterPro"/>
</dbReference>
<dbReference type="GO" id="GO:0006122">
    <property type="term" value="P:mitochondrial electron transport, ubiquinol to cytochrome c"/>
    <property type="evidence" value="ECO:0007669"/>
    <property type="project" value="TreeGrafter"/>
</dbReference>
<dbReference type="CDD" id="cd00290">
    <property type="entry name" value="cytochrome_b_C"/>
    <property type="match status" value="1"/>
</dbReference>
<dbReference type="CDD" id="cd00284">
    <property type="entry name" value="Cytochrome_b_N"/>
    <property type="match status" value="1"/>
</dbReference>
<dbReference type="FunFam" id="1.20.810.10:FF:000002">
    <property type="entry name" value="Cytochrome b"/>
    <property type="match status" value="1"/>
</dbReference>
<dbReference type="Gene3D" id="1.20.810.10">
    <property type="entry name" value="Cytochrome Bc1 Complex, Chain C"/>
    <property type="match status" value="1"/>
</dbReference>
<dbReference type="InterPro" id="IPR005798">
    <property type="entry name" value="Cyt_b/b6_C"/>
</dbReference>
<dbReference type="InterPro" id="IPR036150">
    <property type="entry name" value="Cyt_b/b6_C_sf"/>
</dbReference>
<dbReference type="InterPro" id="IPR005797">
    <property type="entry name" value="Cyt_b/b6_N"/>
</dbReference>
<dbReference type="InterPro" id="IPR027387">
    <property type="entry name" value="Cytb/b6-like_sf"/>
</dbReference>
<dbReference type="InterPro" id="IPR030689">
    <property type="entry name" value="Cytochrome_b"/>
</dbReference>
<dbReference type="InterPro" id="IPR048260">
    <property type="entry name" value="Cytochrome_b_C_euk/bac"/>
</dbReference>
<dbReference type="InterPro" id="IPR048259">
    <property type="entry name" value="Cytochrome_b_N_euk/bac"/>
</dbReference>
<dbReference type="InterPro" id="IPR016174">
    <property type="entry name" value="Di-haem_cyt_TM"/>
</dbReference>
<dbReference type="PANTHER" id="PTHR19271">
    <property type="entry name" value="CYTOCHROME B"/>
    <property type="match status" value="1"/>
</dbReference>
<dbReference type="PANTHER" id="PTHR19271:SF16">
    <property type="entry name" value="CYTOCHROME B"/>
    <property type="match status" value="1"/>
</dbReference>
<dbReference type="Pfam" id="PF00032">
    <property type="entry name" value="Cytochrom_B_C"/>
    <property type="match status" value="1"/>
</dbReference>
<dbReference type="Pfam" id="PF00033">
    <property type="entry name" value="Cytochrome_B"/>
    <property type="match status" value="1"/>
</dbReference>
<dbReference type="PIRSF" id="PIRSF038885">
    <property type="entry name" value="COB"/>
    <property type="match status" value="1"/>
</dbReference>
<dbReference type="SUPFAM" id="SSF81648">
    <property type="entry name" value="a domain/subunit of cytochrome bc1 complex (Ubiquinol-cytochrome c reductase)"/>
    <property type="match status" value="1"/>
</dbReference>
<dbReference type="SUPFAM" id="SSF81342">
    <property type="entry name" value="Transmembrane di-heme cytochromes"/>
    <property type="match status" value="1"/>
</dbReference>
<dbReference type="PROSITE" id="PS51003">
    <property type="entry name" value="CYTB_CTER"/>
    <property type="match status" value="1"/>
</dbReference>
<dbReference type="PROSITE" id="PS51002">
    <property type="entry name" value="CYTB_NTER"/>
    <property type="match status" value="1"/>
</dbReference>
<sequence length="379" mass="42367">MTNIRKSHPLFKIINDSFVDLPAPSSISSWWNFGSLLGICLAIQILTGLFLAMHYTSDTATAFHSVTHICRDVNYGWVLRYLHANGASMFFICLFLHVGRGIYYGSYTFSETWNIGIILLFAVMATAFMGYVLPWGQMSFWGATVITNLLSAIPYVGTTLVEWVWGGFSVDKATLTRFFALHFLLPFIIAAMVMVHLLFLHETGSNNPTGIPSDADMIPFHPYYTIKDILGLVLMLMALLSLVLFAPDLLGDPDNYTPANPLNTPPHIKPEWYFLFAYAILRSIPNKLGGVVALVLSILILAAIPLLHTSKQRSMAFRPLSQCLFWLLVADLLTLTWIGGQPVEHPFIIIGQLASILYFLIILVLMPLASIAENHLLKW</sequence>
<comment type="function">
    <text evidence="2">Component of the ubiquinol-cytochrome c reductase complex (complex III or cytochrome b-c1 complex) that is part of the mitochondrial respiratory chain. The b-c1 complex mediates electron transfer from ubiquinol to cytochrome c. Contributes to the generation of a proton gradient across the mitochondrial membrane that is then used for ATP synthesis.</text>
</comment>
<comment type="cofactor">
    <cofactor evidence="2">
        <name>heme b</name>
        <dbReference type="ChEBI" id="CHEBI:60344"/>
    </cofactor>
    <text evidence="2">Binds 2 heme b groups non-covalently.</text>
</comment>
<comment type="subunit">
    <text evidence="2">The cytochrome bc1 complex contains 11 subunits: 3 respiratory subunits (MT-CYB, CYC1 and UQCRFS1), 2 core proteins (UQCRC1 and UQCRC2) and 6 low-molecular weight proteins (UQCRH/QCR6, UQCRB/QCR7, UQCRQ/QCR8, UQCR10/QCR9, UQCR11/QCR10 and a cleavage product of UQCRFS1). This cytochrome bc1 complex then forms a dimer.</text>
</comment>
<comment type="subcellular location">
    <subcellularLocation>
        <location evidence="2">Mitochondrion inner membrane</location>
        <topology evidence="2">Multi-pass membrane protein</topology>
    </subcellularLocation>
</comment>
<comment type="miscellaneous">
    <text evidence="1">Heme 1 (or BL or b562) is low-potential and absorbs at about 562 nm, and heme 2 (or BH or b566) is high-potential and absorbs at about 566 nm.</text>
</comment>
<comment type="similarity">
    <text evidence="3 4">Belongs to the cytochrome b family.</text>
</comment>
<comment type="caution">
    <text evidence="2">The full-length protein contains only eight transmembrane helices, not nine as predicted by bioinformatics tools.</text>
</comment>
<evidence type="ECO:0000250" key="1"/>
<evidence type="ECO:0000250" key="2">
    <source>
        <dbReference type="UniProtKB" id="P00157"/>
    </source>
</evidence>
<evidence type="ECO:0000255" key="3">
    <source>
        <dbReference type="PROSITE-ProRule" id="PRU00967"/>
    </source>
</evidence>
<evidence type="ECO:0000255" key="4">
    <source>
        <dbReference type="PROSITE-ProRule" id="PRU00968"/>
    </source>
</evidence>
<evidence type="ECO:0000305" key="5"/>
<reference key="1">
    <citation type="submission" date="2002-05" db="EMBL/GenBank/DDBJ databases">
        <title>Bats cytochrome b gene.</title>
        <authorList>
            <person name="Sakai T."/>
            <person name="Kikkawa Y."/>
            <person name="Tuchiya K."/>
            <person name="Harada M."/>
            <person name="Kanoe M."/>
            <person name="Yoshiyuki M."/>
            <person name="Yonekawa H."/>
        </authorList>
    </citation>
    <scope>NUCLEOTIDE SEQUENCE [GENOMIC DNA]</scope>
</reference>
<reference key="2">
    <citation type="journal article" date="1997" name="Nature">
        <title>DNA answers the call of pipistrelle bat species.</title>
        <authorList>
            <person name="Barratt E.M."/>
            <person name="Deaville R."/>
            <person name="Burland T.M."/>
            <person name="Bruford M.W."/>
            <person name="Jones G."/>
            <person name="Racey P.A."/>
            <person name="Wayne R.K."/>
        </authorList>
    </citation>
    <scope>NUCLEOTIDE SEQUENCE [GENOMIC DNA] OF 9-119 AND 282-379</scope>
</reference>
<geneLocation type="mitochondrion"/>
<feature type="chain" id="PRO_0000061496" description="Cytochrome b">
    <location>
        <begin position="1"/>
        <end position="379"/>
    </location>
</feature>
<feature type="transmembrane region" description="Helical" evidence="2">
    <location>
        <begin position="33"/>
        <end position="53"/>
    </location>
</feature>
<feature type="transmembrane region" description="Helical" evidence="2">
    <location>
        <begin position="77"/>
        <end position="98"/>
    </location>
</feature>
<feature type="transmembrane region" description="Helical" evidence="2">
    <location>
        <begin position="113"/>
        <end position="133"/>
    </location>
</feature>
<feature type="transmembrane region" description="Helical" evidence="2">
    <location>
        <begin position="178"/>
        <end position="198"/>
    </location>
</feature>
<feature type="transmembrane region" description="Helical" evidence="2">
    <location>
        <begin position="226"/>
        <end position="246"/>
    </location>
</feature>
<feature type="transmembrane region" description="Helical" evidence="2">
    <location>
        <begin position="288"/>
        <end position="308"/>
    </location>
</feature>
<feature type="transmembrane region" description="Helical" evidence="2">
    <location>
        <begin position="320"/>
        <end position="340"/>
    </location>
</feature>
<feature type="transmembrane region" description="Helical" evidence="2">
    <location>
        <begin position="347"/>
        <end position="367"/>
    </location>
</feature>
<feature type="binding site" description="axial binding residue" evidence="2">
    <location>
        <position position="83"/>
    </location>
    <ligand>
        <name>heme b</name>
        <dbReference type="ChEBI" id="CHEBI:60344"/>
        <label>b562</label>
    </ligand>
    <ligandPart>
        <name>Fe</name>
        <dbReference type="ChEBI" id="CHEBI:18248"/>
    </ligandPart>
</feature>
<feature type="binding site" description="axial binding residue" evidence="2">
    <location>
        <position position="97"/>
    </location>
    <ligand>
        <name>heme b</name>
        <dbReference type="ChEBI" id="CHEBI:60344"/>
        <label>b566</label>
    </ligand>
    <ligandPart>
        <name>Fe</name>
        <dbReference type="ChEBI" id="CHEBI:18248"/>
    </ligandPart>
</feature>
<feature type="binding site" description="axial binding residue" evidence="2">
    <location>
        <position position="182"/>
    </location>
    <ligand>
        <name>heme b</name>
        <dbReference type="ChEBI" id="CHEBI:60344"/>
        <label>b562</label>
    </ligand>
    <ligandPart>
        <name>Fe</name>
        <dbReference type="ChEBI" id="CHEBI:18248"/>
    </ligandPart>
</feature>
<feature type="binding site" description="axial binding residue" evidence="2">
    <location>
        <position position="196"/>
    </location>
    <ligand>
        <name>heme b</name>
        <dbReference type="ChEBI" id="CHEBI:60344"/>
        <label>b566</label>
    </ligand>
    <ligandPart>
        <name>Fe</name>
        <dbReference type="ChEBI" id="CHEBI:18248"/>
    </ligandPart>
</feature>
<feature type="binding site" evidence="2">
    <location>
        <position position="201"/>
    </location>
    <ligand>
        <name>a ubiquinone</name>
        <dbReference type="ChEBI" id="CHEBI:16389"/>
    </ligand>
</feature>
<feature type="sequence variant">
    <original>V</original>
    <variation>A</variation>
    <location>
        <position position="78"/>
    </location>
</feature>
<feature type="sequence variant">
    <original>I</original>
    <variation>T</variation>
    <location>
        <position position="117"/>
    </location>
</feature>
<feature type="sequence conflict" description="In Ref. 2; AAC48751." evidence="5" ref="2">
    <original>A</original>
    <variation>V</variation>
    <location>
        <position position="303"/>
    </location>
</feature>
<feature type="sequence conflict" description="In Ref. 2; AAC48751." evidence="5" ref="2">
    <original>A</original>
    <variation>T</variation>
    <location>
        <position position="316"/>
    </location>
</feature>
<keyword id="KW-0249">Electron transport</keyword>
<keyword id="KW-0349">Heme</keyword>
<keyword id="KW-0408">Iron</keyword>
<keyword id="KW-0472">Membrane</keyword>
<keyword id="KW-0479">Metal-binding</keyword>
<keyword id="KW-0496">Mitochondrion</keyword>
<keyword id="KW-0999">Mitochondrion inner membrane</keyword>
<keyword id="KW-1185">Reference proteome</keyword>
<keyword id="KW-0679">Respiratory chain</keyword>
<keyword id="KW-0812">Transmembrane</keyword>
<keyword id="KW-1133">Transmembrane helix</keyword>
<keyword id="KW-0813">Transport</keyword>
<keyword id="KW-0830">Ubiquinone</keyword>
<gene>
    <name type="primary">MT-CYB</name>
    <name type="synonym">COB</name>
    <name type="synonym">CYTB</name>
    <name type="synonym">MTCYB</name>
</gene>
<name>CYB_RHIFE</name>
<accession>O21298</accession>
<accession>O21297</accession>
<accession>Q8HC80</accession>
<accession>Q8HCG5</accession>
<accession>Q8HQF3</accession>